<organism>
    <name type="scientific">Shigella flexneri serotype 5b (strain 8401)</name>
    <dbReference type="NCBI Taxonomy" id="373384"/>
    <lineage>
        <taxon>Bacteria</taxon>
        <taxon>Pseudomonadati</taxon>
        <taxon>Pseudomonadota</taxon>
        <taxon>Gammaproteobacteria</taxon>
        <taxon>Enterobacterales</taxon>
        <taxon>Enterobacteriaceae</taxon>
        <taxon>Shigella</taxon>
    </lineage>
</organism>
<name>YBED_SHIF8</name>
<proteinExistence type="inferred from homology"/>
<gene>
    <name evidence="1" type="primary">ybeD</name>
    <name type="ordered locus">SFV_0695</name>
</gene>
<feature type="chain" id="PRO_1000061901" description="UPF0250 protein YbeD">
    <location>
        <begin position="1"/>
        <end position="87"/>
    </location>
</feature>
<evidence type="ECO:0000255" key="1">
    <source>
        <dbReference type="HAMAP-Rule" id="MF_00659"/>
    </source>
</evidence>
<accession>Q0T6P1</accession>
<sequence>MKTKLNELLEFPTPFTYKVMGQALPELVDQVVEVVQRHAPGDYTPTVKPSSKGNYHSVSITINATHIEQVETLYEELGKIDIVRMVL</sequence>
<reference key="1">
    <citation type="journal article" date="2006" name="BMC Genomics">
        <title>Complete genome sequence of Shigella flexneri 5b and comparison with Shigella flexneri 2a.</title>
        <authorList>
            <person name="Nie H."/>
            <person name="Yang F."/>
            <person name="Zhang X."/>
            <person name="Yang J."/>
            <person name="Chen L."/>
            <person name="Wang J."/>
            <person name="Xiong Z."/>
            <person name="Peng J."/>
            <person name="Sun L."/>
            <person name="Dong J."/>
            <person name="Xue Y."/>
            <person name="Xu X."/>
            <person name="Chen S."/>
            <person name="Yao Z."/>
            <person name="Shen Y."/>
            <person name="Jin Q."/>
        </authorList>
    </citation>
    <scope>NUCLEOTIDE SEQUENCE [LARGE SCALE GENOMIC DNA]</scope>
    <source>
        <strain>8401</strain>
    </source>
</reference>
<dbReference type="EMBL" id="CP000266">
    <property type="protein sequence ID" value="ABF02935.1"/>
    <property type="molecule type" value="Genomic_DNA"/>
</dbReference>
<dbReference type="RefSeq" id="WP_000850550.1">
    <property type="nucleotide sequence ID" value="NC_008258.1"/>
</dbReference>
<dbReference type="SMR" id="Q0T6P1"/>
<dbReference type="GeneID" id="93776851"/>
<dbReference type="KEGG" id="sfv:SFV_0695"/>
<dbReference type="HOGENOM" id="CLU_161438_2_1_6"/>
<dbReference type="Proteomes" id="UP000000659">
    <property type="component" value="Chromosome"/>
</dbReference>
<dbReference type="GO" id="GO:0005829">
    <property type="term" value="C:cytosol"/>
    <property type="evidence" value="ECO:0007669"/>
    <property type="project" value="TreeGrafter"/>
</dbReference>
<dbReference type="FunFam" id="3.30.70.260:FF:000002">
    <property type="entry name" value="UPF0250 protein YbeD"/>
    <property type="match status" value="1"/>
</dbReference>
<dbReference type="Gene3D" id="3.30.70.260">
    <property type="match status" value="1"/>
</dbReference>
<dbReference type="HAMAP" id="MF_00659">
    <property type="entry name" value="UPF0250"/>
    <property type="match status" value="1"/>
</dbReference>
<dbReference type="InterPro" id="IPR007454">
    <property type="entry name" value="UPF0250_YbeD-like"/>
</dbReference>
<dbReference type="InterPro" id="IPR027471">
    <property type="entry name" value="YbeD-like_sf"/>
</dbReference>
<dbReference type="NCBIfam" id="NF003447">
    <property type="entry name" value="PRK04998.1"/>
    <property type="match status" value="1"/>
</dbReference>
<dbReference type="PANTHER" id="PTHR38036">
    <property type="entry name" value="UPF0250 PROTEIN YBED"/>
    <property type="match status" value="1"/>
</dbReference>
<dbReference type="PANTHER" id="PTHR38036:SF1">
    <property type="entry name" value="UPF0250 PROTEIN YBED"/>
    <property type="match status" value="1"/>
</dbReference>
<dbReference type="Pfam" id="PF04359">
    <property type="entry name" value="DUF493"/>
    <property type="match status" value="1"/>
</dbReference>
<dbReference type="SUPFAM" id="SSF117991">
    <property type="entry name" value="YbeD/HP0495-like"/>
    <property type="match status" value="1"/>
</dbReference>
<comment type="similarity">
    <text evidence="1">Belongs to the UPF0250 family.</text>
</comment>
<protein>
    <recommendedName>
        <fullName evidence="1">UPF0250 protein YbeD</fullName>
    </recommendedName>
</protein>